<dbReference type="EMBL" id="AH003669">
    <property type="protein sequence ID" value="AAB12992.1"/>
    <property type="molecule type" value="Genomic_RNA"/>
</dbReference>
<dbReference type="PDB" id="1ETF">
    <property type="method" value="NMR"/>
    <property type="chains" value="B=8-31"/>
</dbReference>
<dbReference type="PDB" id="1ETG">
    <property type="method" value="NMR"/>
    <property type="chains" value="B=8-31"/>
</dbReference>
<dbReference type="PDB" id="1ULL">
    <property type="method" value="NMR"/>
    <property type="chains" value="B=8-24"/>
</dbReference>
<dbReference type="PDBsum" id="1ETF"/>
<dbReference type="PDBsum" id="1ETG"/>
<dbReference type="PDBsum" id="1ULL"/>
<dbReference type="SMR" id="P05866"/>
<dbReference type="BindingDB" id="P05866"/>
<dbReference type="ChEMBL" id="CHEMBL1293283"/>
<dbReference type="EvolutionaryTrace" id="P05866"/>
<dbReference type="GO" id="GO:0030430">
    <property type="term" value="C:host cell cytoplasm"/>
    <property type="evidence" value="ECO:0007669"/>
    <property type="project" value="UniProtKB-SubCell"/>
</dbReference>
<dbReference type="GO" id="GO:0044196">
    <property type="term" value="C:host cell nucleolus"/>
    <property type="evidence" value="ECO:0007669"/>
    <property type="project" value="UniProtKB-SubCell"/>
</dbReference>
<dbReference type="GO" id="GO:0003700">
    <property type="term" value="F:DNA-binding transcription factor activity"/>
    <property type="evidence" value="ECO:0007669"/>
    <property type="project" value="InterPro"/>
</dbReference>
<dbReference type="GO" id="GO:0003723">
    <property type="term" value="F:RNA binding"/>
    <property type="evidence" value="ECO:0007669"/>
    <property type="project" value="UniProtKB-KW"/>
</dbReference>
<dbReference type="GO" id="GO:0051028">
    <property type="term" value="P:mRNA transport"/>
    <property type="evidence" value="ECO:0007669"/>
    <property type="project" value="UniProtKB-KW"/>
</dbReference>
<dbReference type="Gene3D" id="6.10.140.630">
    <property type="match status" value="1"/>
</dbReference>
<dbReference type="InterPro" id="IPR000625">
    <property type="entry name" value="REV_protein"/>
</dbReference>
<dbReference type="Pfam" id="PF00424">
    <property type="entry name" value="REV"/>
    <property type="match status" value="1"/>
</dbReference>
<reference key="1">
    <citation type="journal article" date="1986" name="Science">
        <title>Genetic variation in HTLV-III/LAV over time in patients with AIDS or at risk for AIDS.</title>
        <authorList>
            <person name="Hahn B.H."/>
            <person name="Shaw G.M."/>
            <person name="Taylor M.E."/>
            <person name="Redfield R.R."/>
            <person name="Markham P.D."/>
            <person name="Salahuddin S.Z."/>
            <person name="Wong-Staal F."/>
            <person name="Gallo R.C."/>
            <person name="Parks E.S."/>
            <person name="Parks W.P."/>
        </authorList>
    </citation>
    <scope>NUCLEOTIDE SEQUENCE [GENOMIC RNA]</scope>
</reference>
<reference key="2">
    <citation type="journal article" date="1999" name="Arch. Biochem. Biophys.">
        <title>The ins and outs of HIV Rev.</title>
        <authorList>
            <person name="Hope T.J."/>
        </authorList>
    </citation>
    <scope>REVIEW</scope>
</reference>
<reference key="3">
    <citation type="journal article" date="1996" name="Science">
        <title>Alpha helix-RNA major groove recognition in an HIV-1 rev peptide-RRE RNA complex.</title>
        <authorList>
            <person name="Battiste J.L."/>
            <person name="Mao H."/>
            <person name="Rao N.S."/>
            <person name="Tan R."/>
            <person name="Muhandiram D.R."/>
            <person name="Kay L.E."/>
            <person name="Frankel A.D."/>
            <person name="Williamson J.R."/>
        </authorList>
    </citation>
    <scope>STRUCTURE BY NMR OF 8-24 IN COMPLEX WITH RRE-RNA</scope>
</reference>
<keyword id="KW-0002">3D-structure</keyword>
<keyword id="KW-0014">AIDS</keyword>
<keyword id="KW-1035">Host cytoplasm</keyword>
<keyword id="KW-1048">Host nucleus</keyword>
<keyword id="KW-0945">Host-virus interaction</keyword>
<keyword id="KW-0488">Methylation</keyword>
<keyword id="KW-0509">mRNA transport</keyword>
<keyword id="KW-0597">Phosphoprotein</keyword>
<keyword id="KW-0694">RNA-binding</keyword>
<keyword id="KW-0813">Transport</keyword>
<comment type="function">
    <text evidence="1">Escorts unspliced or incompletely spliced viral pre-mRNAs (late transcripts) out of the nucleus of infected cells. These pre-mRNAs carry a recognition sequence called Rev responsive element (RRE) located in the env gene, that is not present in fully spliced viral mRNAs (early transcripts). This function is essential since most viral proteins are translated from unspliced or partially spliced pre-mRNAs which cannot exit the nucleus by the pathway used by fully processed cellular mRNAs. Rev itself is translated from a fully spliced mRNA that readily exits the nucleus. Rev's nuclear localization signal (NLS) binds directly to KPNB1/Importin beta-1 without previous binding to KPNA1/Importin alpha-1. KPNB1 binds to the GDP bound form of RAN (Ran-GDP) and targets Rev to the nucleus. In the nucleus, the conversion from Ran-GDP to Ran-GTP dissociates Rev from KPNB1 and allows Rev's binding to the RRE in viral pre-mRNAs. Rev multimerization on the RRE via cooperative assembly exposes its nuclear export signal (NES) to the surface. Rev can then form a complex with XPO1/CRM1 and Ran-GTP, leading to nuclear export of the complex. Conversion from Ran-GTP to Ran-GDP mediates dissociation of the Rev/RRE/XPO1/RAN complex, so that Rev can return to the nucleus for a subsequent round of export. Beside KPNB1, also seems to interact with TNPO1/Transportin-1, RANBP5/IPO5 and IPO7/RANBP7 for nuclear import. The nucleoporin-like HRB/RIP is an essential cofactor that probably indirectly interacts with Rev to release HIV RNAs from the perinuclear region to the cytoplasm (By similarity).</text>
</comment>
<comment type="subunit">
    <text evidence="1">Homomultimer; when bound to the RRE. Multimeric assembly is essential for activity and may involve XPO1. Binds to human KPNB1, XPO1, TNPO1, RANBP5 and IPO7 (By similarity).</text>
</comment>
<comment type="subcellular location">
    <subcellularLocation>
        <location>Host nucleus</location>
        <location>Host nucleolus</location>
    </subcellularLocation>
    <subcellularLocation>
        <location>Host cytoplasm</location>
    </subcellularLocation>
    <text evidence="1">The presence of both nuclear import and nuclear export signals leads to continuous shuttling between the nucleus and cytoplasm.</text>
</comment>
<comment type="domain">
    <text evidence="1">The RNA-binding motif binds to the RRE, a 240 bp stem-and-loop structure present in incompletely spliced viral pre-mRNAs. This region also contains the NLS which mediates nuclear localization via KPNB1 binding and, when the N-terminal sequence is present, nucleolar targeting. These overlapping functions prevent Rev bound to RRE from undesirable return to the nucleus. When Rev binds the RRE, the NLS becomes masked while the NES remains accessible. The leucine-rich NES mediates binding to human XPO1 (By similarity).</text>
</comment>
<comment type="PTM">
    <text evidence="1">Phosphorylated by protein kinase CK2. Presence of, and maybe binding to the N-terminus of the regulatory beta subunit of CK2 is necessary for CK2-mediated Rev's phosphorylation (By similarity).</text>
</comment>
<comment type="PTM">
    <text evidence="1">Asymmetrically arginine dimethylated at one site by host PRMT6. Methylation impairs the RNA-binding activity and export of viral RNA from the nucleus to the cytoplasm (By similarity).</text>
</comment>
<comment type="miscellaneous">
    <text>Isolates WMJ1, WMJ2, and WMJ3 were obtained from blood samples sequentially taken from a two-year old Haitian who was perinatally infected by her mother.</text>
</comment>
<comment type="miscellaneous">
    <text>HIV-1 lineages are divided in three main groups, M (for Major), O (for Outlier), and N (for New, or Non-M, Non-O). The vast majority of strains found worldwide belong to the group M. Group O seems to be endemic to and largely confined to Cameroon and neighboring countries in West Central Africa, where these viruses represent a small minority of HIV-1 strains. The group N is represented by a limited number of isolates from Cameroonian persons. The group M is further subdivided in 9 clades or subtypes (A to D, F to H, J and K).</text>
</comment>
<accession>P05866</accession>
<protein>
    <recommendedName>
        <fullName>Protein Rev</fullName>
    </recommendedName>
    <alternativeName>
        <fullName>ART/TRS</fullName>
    </alternativeName>
    <alternativeName>
        <fullName>Anti-repression transactivator</fullName>
    </alternativeName>
    <alternativeName>
        <fullName>Regulator of expression of viral proteins</fullName>
    </alternativeName>
</protein>
<feature type="chain" id="PRO_0000085278" description="Protein Rev">
    <location>
        <begin position="1" status="less than"/>
        <end position="90"/>
    </location>
</feature>
<feature type="region of interest" description="Disordered" evidence="2">
    <location>
        <begin position="1"/>
        <end position="22"/>
    </location>
</feature>
<feature type="short sequence motif" description="Nuclear localization signal and RNA-binding (RRE)" evidence="1">
    <location>
        <begin position="8"/>
        <end position="24"/>
    </location>
</feature>
<feature type="short sequence motif" description="Nuclear export signal and binding to XPO1" evidence="1">
    <location>
        <begin position="47"/>
        <end position="58"/>
    </location>
</feature>
<feature type="compositionally biased region" description="Basic residues" evidence="2">
    <location>
        <begin position="10"/>
        <end position="21"/>
    </location>
</feature>
<feature type="modified residue" description="Phosphoserine; by host" evidence="1">
    <location>
        <position position="66"/>
    </location>
</feature>
<feature type="modified residue" description="Phosphoserine; by host" evidence="1">
    <location>
        <position position="73"/>
    </location>
</feature>
<feature type="non-terminal residue">
    <location>
        <position position="1"/>
    </location>
</feature>
<feature type="helix" evidence="3">
    <location>
        <begin position="9"/>
        <end position="28"/>
    </location>
</feature>
<proteinExistence type="evidence at protein level"/>
<organismHost>
    <name type="scientific">Homo sapiens</name>
    <name type="common">Human</name>
    <dbReference type="NCBI Taxonomy" id="9606"/>
</organismHost>
<sequence>PPPNPEGTRQARRNRRRRWRERQRQIRSIGAWILSTYLGRSAEPVPLQLPPLERLTLDCEEDCGTSGTQGVGSPQVLVESPAVLEQGTKE</sequence>
<evidence type="ECO:0000250" key="1"/>
<evidence type="ECO:0000256" key="2">
    <source>
        <dbReference type="SAM" id="MobiDB-lite"/>
    </source>
</evidence>
<evidence type="ECO:0007829" key="3">
    <source>
        <dbReference type="PDB" id="1ETF"/>
    </source>
</evidence>
<name>REV_HV1W2</name>
<organism>
    <name type="scientific">Human immunodeficiency virus type 1 group M subtype B (isolate WMJ22)</name>
    <name type="common">HIV-1</name>
    <dbReference type="NCBI Taxonomy" id="11705"/>
    <lineage>
        <taxon>Viruses</taxon>
        <taxon>Riboviria</taxon>
        <taxon>Pararnavirae</taxon>
        <taxon>Artverviricota</taxon>
        <taxon>Revtraviricetes</taxon>
        <taxon>Ortervirales</taxon>
        <taxon>Retroviridae</taxon>
        <taxon>Orthoretrovirinae</taxon>
        <taxon>Lentivirus</taxon>
        <taxon>Human immunodeficiency virus type 1</taxon>
    </lineage>
</organism>
<gene>
    <name type="primary">rev</name>
</gene>